<sequence>MKLKNIVNYLKEVGIDVELKGDDSINVDQVSGLVEAQQNHISFLSDSKRIHELETTSAGVVLIHPKFESLTTTTCLLVENPYFAFAKVSQLLNPENFPAGIHASAVVDDSAKIAESAWIGENVVIGKRVTIGDNCYIGPGSVVLDDSVIGQKTRLVANVTVMHNCIIGEEGYLDPGCVIGGQGFGFANEQGEWHKIPQIGRVVIGDRVFVGVNANIHRGAINDTVIESNCIIDSLVHIAHNVSIGYGSAIASQVGFAGSTAVGKYCVFAGQAGINGHISIADKSYFAAKSGVTHTIKESGSYSGFPAIPTPEWQKNMVRSKGLNKMAQKIKHLEKELQELKSKLEND</sequence>
<organism>
    <name type="scientific">Hydrogenovibrio crunogenus (strain DSM 25203 / XCL-2)</name>
    <name type="common">Thiomicrospira crunogena</name>
    <dbReference type="NCBI Taxonomy" id="317025"/>
    <lineage>
        <taxon>Bacteria</taxon>
        <taxon>Pseudomonadati</taxon>
        <taxon>Pseudomonadota</taxon>
        <taxon>Gammaproteobacteria</taxon>
        <taxon>Thiotrichales</taxon>
        <taxon>Piscirickettsiaceae</taxon>
        <taxon>Hydrogenovibrio</taxon>
    </lineage>
</organism>
<reference key="1">
    <citation type="journal article" date="2006" name="PLoS Biol.">
        <title>The genome of deep-sea vent chemolithoautotroph Thiomicrospira crunogena XCL-2.</title>
        <authorList>
            <person name="Scott K.M."/>
            <person name="Sievert S.M."/>
            <person name="Abril F.N."/>
            <person name="Ball L.A."/>
            <person name="Barrett C.J."/>
            <person name="Blake R.A."/>
            <person name="Boller A.J."/>
            <person name="Chain P.S.G."/>
            <person name="Clark J.A."/>
            <person name="Davis C.R."/>
            <person name="Detter C."/>
            <person name="Do K.F."/>
            <person name="Dobrinski K.P."/>
            <person name="Faza B.I."/>
            <person name="Fitzpatrick K.A."/>
            <person name="Freyermuth S.K."/>
            <person name="Harmer T.L."/>
            <person name="Hauser L.J."/>
            <person name="Huegler M."/>
            <person name="Kerfeld C.A."/>
            <person name="Klotz M.G."/>
            <person name="Kong W.W."/>
            <person name="Land M."/>
            <person name="Lapidus A."/>
            <person name="Larimer F.W."/>
            <person name="Longo D.L."/>
            <person name="Lucas S."/>
            <person name="Malfatti S.A."/>
            <person name="Massey S.E."/>
            <person name="Martin D.D."/>
            <person name="McCuddin Z."/>
            <person name="Meyer F."/>
            <person name="Moore J.L."/>
            <person name="Ocampo L.H. Jr."/>
            <person name="Paul J.H."/>
            <person name="Paulsen I.T."/>
            <person name="Reep D.K."/>
            <person name="Ren Q."/>
            <person name="Ross R.L."/>
            <person name="Sato P.Y."/>
            <person name="Thomas P."/>
            <person name="Tinkham L.E."/>
            <person name="Zeruth G.T."/>
        </authorList>
    </citation>
    <scope>NUCLEOTIDE SEQUENCE [LARGE SCALE GENOMIC DNA]</scope>
    <source>
        <strain>DSM 25203 / XCL-2</strain>
    </source>
</reference>
<keyword id="KW-0012">Acyltransferase</keyword>
<keyword id="KW-0441">Lipid A biosynthesis</keyword>
<keyword id="KW-0444">Lipid biosynthesis</keyword>
<keyword id="KW-0443">Lipid metabolism</keyword>
<keyword id="KW-0677">Repeat</keyword>
<keyword id="KW-0808">Transferase</keyword>
<name>LPXD_HYDCU</name>
<accession>Q31G52</accession>
<evidence type="ECO:0000255" key="1">
    <source>
        <dbReference type="HAMAP-Rule" id="MF_00523"/>
    </source>
</evidence>
<feature type="chain" id="PRO_0000264451" description="UDP-3-O-acylglucosamine N-acyltransferase">
    <location>
        <begin position="1"/>
        <end position="347"/>
    </location>
</feature>
<feature type="active site" description="Proton acceptor" evidence="1">
    <location>
        <position position="240"/>
    </location>
</feature>
<proteinExistence type="inferred from homology"/>
<dbReference type="EC" id="2.3.1.191" evidence="1"/>
<dbReference type="EMBL" id="CP000109">
    <property type="protein sequence ID" value="ABB41871.1"/>
    <property type="molecule type" value="Genomic_DNA"/>
</dbReference>
<dbReference type="SMR" id="Q31G52"/>
<dbReference type="STRING" id="317025.Tcr_1276"/>
<dbReference type="KEGG" id="tcx:Tcr_1276"/>
<dbReference type="eggNOG" id="COG1044">
    <property type="taxonomic scope" value="Bacteria"/>
</dbReference>
<dbReference type="HOGENOM" id="CLU_049865_0_0_6"/>
<dbReference type="OrthoDB" id="9784739at2"/>
<dbReference type="UniPathway" id="UPA00973"/>
<dbReference type="GO" id="GO:0016020">
    <property type="term" value="C:membrane"/>
    <property type="evidence" value="ECO:0007669"/>
    <property type="project" value="GOC"/>
</dbReference>
<dbReference type="GO" id="GO:0016410">
    <property type="term" value="F:N-acyltransferase activity"/>
    <property type="evidence" value="ECO:0007669"/>
    <property type="project" value="InterPro"/>
</dbReference>
<dbReference type="GO" id="GO:0009245">
    <property type="term" value="P:lipid A biosynthetic process"/>
    <property type="evidence" value="ECO:0007669"/>
    <property type="project" value="UniProtKB-UniRule"/>
</dbReference>
<dbReference type="CDD" id="cd03352">
    <property type="entry name" value="LbH_LpxD"/>
    <property type="match status" value="1"/>
</dbReference>
<dbReference type="Gene3D" id="1.20.5.170">
    <property type="match status" value="1"/>
</dbReference>
<dbReference type="Gene3D" id="2.160.10.10">
    <property type="entry name" value="Hexapeptide repeat proteins"/>
    <property type="match status" value="1"/>
</dbReference>
<dbReference type="Gene3D" id="3.40.1390.10">
    <property type="entry name" value="MurE/MurF, N-terminal domain"/>
    <property type="match status" value="1"/>
</dbReference>
<dbReference type="HAMAP" id="MF_00523">
    <property type="entry name" value="LpxD"/>
    <property type="match status" value="1"/>
</dbReference>
<dbReference type="InterPro" id="IPR001451">
    <property type="entry name" value="Hexapep"/>
</dbReference>
<dbReference type="InterPro" id="IPR007691">
    <property type="entry name" value="LpxD"/>
</dbReference>
<dbReference type="InterPro" id="IPR011004">
    <property type="entry name" value="Trimer_LpxA-like_sf"/>
</dbReference>
<dbReference type="InterPro" id="IPR020573">
    <property type="entry name" value="UDP_GlcNAc_AcTrfase_non-rep"/>
</dbReference>
<dbReference type="NCBIfam" id="TIGR01853">
    <property type="entry name" value="lipid_A_lpxD"/>
    <property type="match status" value="1"/>
</dbReference>
<dbReference type="NCBIfam" id="NF002060">
    <property type="entry name" value="PRK00892.1"/>
    <property type="match status" value="1"/>
</dbReference>
<dbReference type="PANTHER" id="PTHR43378">
    <property type="entry name" value="UDP-3-O-ACYLGLUCOSAMINE N-ACYLTRANSFERASE"/>
    <property type="match status" value="1"/>
</dbReference>
<dbReference type="PANTHER" id="PTHR43378:SF2">
    <property type="entry name" value="UDP-3-O-ACYLGLUCOSAMINE N-ACYLTRANSFERASE 1, MITOCHONDRIAL-RELATED"/>
    <property type="match status" value="1"/>
</dbReference>
<dbReference type="Pfam" id="PF00132">
    <property type="entry name" value="Hexapep"/>
    <property type="match status" value="1"/>
</dbReference>
<dbReference type="Pfam" id="PF04613">
    <property type="entry name" value="LpxD"/>
    <property type="match status" value="1"/>
</dbReference>
<dbReference type="SUPFAM" id="SSF51161">
    <property type="entry name" value="Trimeric LpxA-like enzymes"/>
    <property type="match status" value="1"/>
</dbReference>
<protein>
    <recommendedName>
        <fullName evidence="1">UDP-3-O-acylglucosamine N-acyltransferase</fullName>
        <ecNumber evidence="1">2.3.1.191</ecNumber>
    </recommendedName>
</protein>
<gene>
    <name evidence="1" type="primary">lpxD</name>
    <name type="ordered locus">Tcr_1276</name>
</gene>
<comment type="function">
    <text evidence="1">Catalyzes the N-acylation of UDP-3-O-acylglucosamine using 3-hydroxyacyl-ACP as the acyl donor. Is involved in the biosynthesis of lipid A, a phosphorylated glycolipid that anchors the lipopolysaccharide to the outer membrane of the cell.</text>
</comment>
<comment type="catalytic activity">
    <reaction evidence="1">
        <text>a UDP-3-O-[(3R)-3-hydroxyacyl]-alpha-D-glucosamine + a (3R)-hydroxyacyl-[ACP] = a UDP-2-N,3-O-bis[(3R)-3-hydroxyacyl]-alpha-D-glucosamine + holo-[ACP] + H(+)</text>
        <dbReference type="Rhea" id="RHEA:53836"/>
        <dbReference type="Rhea" id="RHEA-COMP:9685"/>
        <dbReference type="Rhea" id="RHEA-COMP:9945"/>
        <dbReference type="ChEBI" id="CHEBI:15378"/>
        <dbReference type="ChEBI" id="CHEBI:64479"/>
        <dbReference type="ChEBI" id="CHEBI:78827"/>
        <dbReference type="ChEBI" id="CHEBI:137740"/>
        <dbReference type="ChEBI" id="CHEBI:137748"/>
        <dbReference type="EC" id="2.3.1.191"/>
    </reaction>
</comment>
<comment type="pathway">
    <text evidence="1">Bacterial outer membrane biogenesis; LPS lipid A biosynthesis.</text>
</comment>
<comment type="subunit">
    <text evidence="1">Homotrimer.</text>
</comment>
<comment type="similarity">
    <text evidence="1">Belongs to the transferase hexapeptide repeat family. LpxD subfamily.</text>
</comment>